<comment type="function">
    <text evidence="1">Binds as a heterodimer with protein bS6 to the central domain of the 16S rRNA, where it helps stabilize the platform of the 30S subunit.</text>
</comment>
<comment type="subunit">
    <text evidence="1">Part of the 30S ribosomal subunit. Forms a tight heterodimer with protein bS6.</text>
</comment>
<comment type="similarity">
    <text evidence="1">Belongs to the bacterial ribosomal protein bS18 family.</text>
</comment>
<reference key="1">
    <citation type="submission" date="2006-06" db="EMBL/GenBank/DDBJ databases">
        <title>Complete sequence of Pseudoalteromonas atlantica T6c.</title>
        <authorList>
            <consortium name="US DOE Joint Genome Institute"/>
            <person name="Copeland A."/>
            <person name="Lucas S."/>
            <person name="Lapidus A."/>
            <person name="Barry K."/>
            <person name="Detter J.C."/>
            <person name="Glavina del Rio T."/>
            <person name="Hammon N."/>
            <person name="Israni S."/>
            <person name="Dalin E."/>
            <person name="Tice H."/>
            <person name="Pitluck S."/>
            <person name="Saunders E."/>
            <person name="Brettin T."/>
            <person name="Bruce D."/>
            <person name="Han C."/>
            <person name="Tapia R."/>
            <person name="Gilna P."/>
            <person name="Schmutz J."/>
            <person name="Larimer F."/>
            <person name="Land M."/>
            <person name="Hauser L."/>
            <person name="Kyrpides N."/>
            <person name="Kim E."/>
            <person name="Karls A.C."/>
            <person name="Bartlett D."/>
            <person name="Higgins B.P."/>
            <person name="Richardson P."/>
        </authorList>
    </citation>
    <scope>NUCLEOTIDE SEQUENCE [LARGE SCALE GENOMIC DNA]</scope>
    <source>
        <strain>T6c / ATCC BAA-1087</strain>
    </source>
</reference>
<name>RS18_PSEA6</name>
<evidence type="ECO:0000255" key="1">
    <source>
        <dbReference type="HAMAP-Rule" id="MF_00270"/>
    </source>
</evidence>
<evidence type="ECO:0000305" key="2"/>
<proteinExistence type="inferred from homology"/>
<feature type="chain" id="PRO_1000003565" description="Small ribosomal subunit protein bS18">
    <location>
        <begin position="1"/>
        <end position="75"/>
    </location>
</feature>
<dbReference type="EMBL" id="CP000388">
    <property type="protein sequence ID" value="ABG42247.1"/>
    <property type="molecule type" value="Genomic_DNA"/>
</dbReference>
<dbReference type="RefSeq" id="WP_006991716.1">
    <property type="nucleotide sequence ID" value="NC_008228.1"/>
</dbReference>
<dbReference type="SMR" id="Q15PE1"/>
<dbReference type="STRING" id="342610.Patl_3745"/>
<dbReference type="KEGG" id="pat:Patl_3745"/>
<dbReference type="eggNOG" id="COG0238">
    <property type="taxonomic scope" value="Bacteria"/>
</dbReference>
<dbReference type="HOGENOM" id="CLU_148710_2_3_6"/>
<dbReference type="OrthoDB" id="9812008at2"/>
<dbReference type="Proteomes" id="UP000001981">
    <property type="component" value="Chromosome"/>
</dbReference>
<dbReference type="GO" id="GO:0022627">
    <property type="term" value="C:cytosolic small ribosomal subunit"/>
    <property type="evidence" value="ECO:0007669"/>
    <property type="project" value="TreeGrafter"/>
</dbReference>
<dbReference type="GO" id="GO:0070181">
    <property type="term" value="F:small ribosomal subunit rRNA binding"/>
    <property type="evidence" value="ECO:0007669"/>
    <property type="project" value="TreeGrafter"/>
</dbReference>
<dbReference type="GO" id="GO:0003735">
    <property type="term" value="F:structural constituent of ribosome"/>
    <property type="evidence" value="ECO:0007669"/>
    <property type="project" value="InterPro"/>
</dbReference>
<dbReference type="GO" id="GO:0006412">
    <property type="term" value="P:translation"/>
    <property type="evidence" value="ECO:0007669"/>
    <property type="project" value="UniProtKB-UniRule"/>
</dbReference>
<dbReference type="FunFam" id="4.10.640.10:FF:000001">
    <property type="entry name" value="30S ribosomal protein S18"/>
    <property type="match status" value="1"/>
</dbReference>
<dbReference type="Gene3D" id="4.10.640.10">
    <property type="entry name" value="Ribosomal protein S18"/>
    <property type="match status" value="1"/>
</dbReference>
<dbReference type="HAMAP" id="MF_00270">
    <property type="entry name" value="Ribosomal_bS18"/>
    <property type="match status" value="1"/>
</dbReference>
<dbReference type="InterPro" id="IPR001648">
    <property type="entry name" value="Ribosomal_bS18"/>
</dbReference>
<dbReference type="InterPro" id="IPR018275">
    <property type="entry name" value="Ribosomal_bS18_CS"/>
</dbReference>
<dbReference type="InterPro" id="IPR036870">
    <property type="entry name" value="Ribosomal_bS18_sf"/>
</dbReference>
<dbReference type="NCBIfam" id="TIGR00165">
    <property type="entry name" value="S18"/>
    <property type="match status" value="1"/>
</dbReference>
<dbReference type="PANTHER" id="PTHR13479">
    <property type="entry name" value="30S RIBOSOMAL PROTEIN S18"/>
    <property type="match status" value="1"/>
</dbReference>
<dbReference type="PANTHER" id="PTHR13479:SF40">
    <property type="entry name" value="SMALL RIBOSOMAL SUBUNIT PROTEIN BS18M"/>
    <property type="match status" value="1"/>
</dbReference>
<dbReference type="Pfam" id="PF01084">
    <property type="entry name" value="Ribosomal_S18"/>
    <property type="match status" value="1"/>
</dbReference>
<dbReference type="PRINTS" id="PR00974">
    <property type="entry name" value="RIBOSOMALS18"/>
</dbReference>
<dbReference type="SUPFAM" id="SSF46911">
    <property type="entry name" value="Ribosomal protein S18"/>
    <property type="match status" value="1"/>
</dbReference>
<dbReference type="PROSITE" id="PS00057">
    <property type="entry name" value="RIBOSOMAL_S18"/>
    <property type="match status" value="1"/>
</dbReference>
<keyword id="KW-0687">Ribonucleoprotein</keyword>
<keyword id="KW-0689">Ribosomal protein</keyword>
<keyword id="KW-0694">RNA-binding</keyword>
<keyword id="KW-0699">rRNA-binding</keyword>
<organism>
    <name type="scientific">Pseudoalteromonas atlantica (strain T6c / ATCC BAA-1087)</name>
    <dbReference type="NCBI Taxonomy" id="3042615"/>
    <lineage>
        <taxon>Bacteria</taxon>
        <taxon>Pseudomonadati</taxon>
        <taxon>Pseudomonadota</taxon>
        <taxon>Gammaproteobacteria</taxon>
        <taxon>Alteromonadales</taxon>
        <taxon>Alteromonadaceae</taxon>
        <taxon>Paraglaciecola</taxon>
    </lineage>
</organism>
<protein>
    <recommendedName>
        <fullName evidence="1">Small ribosomal subunit protein bS18</fullName>
    </recommendedName>
    <alternativeName>
        <fullName evidence="2">30S ribosomal protein S18</fullName>
    </alternativeName>
</protein>
<accession>Q15PE1</accession>
<gene>
    <name evidence="1" type="primary">rpsR</name>
    <name type="ordered locus">Patl_3745</name>
</gene>
<sequence length="75" mass="8719">MARFFRRRKFCRFSADGVVQIDYKDIAMLKNYVTESGKIVPSRITGTSAKYQRQLSTAIKRARFLALLPYTDSHK</sequence>